<reference key="1">
    <citation type="journal article" date="1989" name="Gene">
        <title>Primary structure of bacteriophage M2 DNA polymerase: conserved segments within protein-priming DNA polymerases and DNA polymerase I of Escherichia coli.</title>
        <authorList>
            <person name="Matsumoto K."/>
            <person name="Takano H."/>
            <person name="Kim C.I."/>
            <person name="Hirokawa H."/>
        </authorList>
    </citation>
    <scope>NUCLEOTIDE SEQUENCE [GENOMIC DNA]</scope>
</reference>
<reference key="2">
    <citation type="journal article" date="2004" name="Mol. Microbiol.">
        <title>Peptidoglycan hydrolytic activities associated with bacteriophage virions.</title>
        <authorList>
            <person name="Moak M."/>
            <person name="Molineux I.J."/>
        </authorList>
    </citation>
    <scope>FUNCTION</scope>
</reference>
<comment type="function">
    <text evidence="1">Acts as a primer for viral genomic replication. DNA terminal protein is covalently linked to the 5'-ends of both strands of the genome through a phosphodiester bond between the beta-hydroxyl group of a serine residue and the 5'-phosphate of the terminal deoxyadenylate. This protein is essential for DNA replication and is involved in the priming of DNA elongation (By similarity).</text>
</comment>
<comment type="function">
    <text evidence="1">Hydrolyzes host peptidoglycans during virus entry.</text>
</comment>
<comment type="subunit">
    <text evidence="1">Heterodimer with viral polymerase. Binds to ssDNA (By similarity).</text>
</comment>
<comment type="subcellular location">
    <subcellularLocation>
        <location evidence="2">Virion</location>
    </subcellularLocation>
</comment>
<comment type="similarity">
    <text evidence="2">Belongs to the phi29likevirus DNA terminal protein family.</text>
</comment>
<organism>
    <name type="scientific">Bacillus phage M2</name>
    <name type="common">Bacteriophage M2</name>
    <dbReference type="NCBI Taxonomy" id="331976"/>
    <lineage>
        <taxon>Viruses</taxon>
        <taxon>Duplodnaviria</taxon>
        <taxon>Heunggongvirae</taxon>
        <taxon>Uroviricota</taxon>
        <taxon>Caudoviricetes</taxon>
        <taxon>Salasmaviridae</taxon>
        <taxon>Picovirinae</taxon>
        <taxon>Salasvirus</taxon>
    </lineage>
</organism>
<gene>
    <name type="primary">3</name>
    <name type="synonym">E</name>
</gene>
<organismHost>
    <name type="scientific">Bacillus</name>
    <dbReference type="NCBI Taxonomy" id="1386"/>
</organismHost>
<name>TERM_BPM2</name>
<evidence type="ECO:0000250" key="1"/>
<evidence type="ECO:0000305" key="2"/>
<dbReference type="EMBL" id="M33144">
    <property type="protein sequence ID" value="AAA32367.1"/>
    <property type="molecule type" value="Genomic_DNA"/>
</dbReference>
<dbReference type="PIR" id="PQ0017">
    <property type="entry name" value="PQ0017"/>
</dbReference>
<dbReference type="GO" id="GO:0044423">
    <property type="term" value="C:virion component"/>
    <property type="evidence" value="ECO:0007669"/>
    <property type="project" value="UniProtKB-KW"/>
</dbReference>
<dbReference type="GO" id="GO:0016787">
    <property type="term" value="F:hydrolase activity"/>
    <property type="evidence" value="ECO:0007669"/>
    <property type="project" value="UniProtKB-KW"/>
</dbReference>
<dbReference type="GO" id="GO:0006260">
    <property type="term" value="P:DNA replication"/>
    <property type="evidence" value="ECO:0007669"/>
    <property type="project" value="UniProtKB-KW"/>
</dbReference>
<dbReference type="GO" id="GO:0098994">
    <property type="term" value="P:symbiont entry into host cell via disruption of host cell envelope"/>
    <property type="evidence" value="ECO:0007669"/>
    <property type="project" value="UniProtKB-KW"/>
</dbReference>
<dbReference type="GO" id="GO:0098932">
    <property type="term" value="P:symbiont entry into host cell via disruption of host cell wall peptidoglycan"/>
    <property type="evidence" value="ECO:0007669"/>
    <property type="project" value="UniProtKB-KW"/>
</dbReference>
<dbReference type="GO" id="GO:0039693">
    <property type="term" value="P:viral DNA genome replication"/>
    <property type="evidence" value="ECO:0007669"/>
    <property type="project" value="UniProtKB-KW"/>
</dbReference>
<feature type="chain" id="PRO_0000106554" description="DNA terminal protein">
    <location>
        <begin position="1" status="less than"/>
        <end position="15"/>
    </location>
</feature>
<feature type="non-terminal residue">
    <location>
        <position position="1"/>
    </location>
</feature>
<proteinExistence type="inferred from homology"/>
<protein>
    <recommendedName>
        <fullName>DNA terminal protein</fullName>
    </recommendedName>
    <alternativeName>
        <fullName>Protein GP3</fullName>
    </alternativeName>
</protein>
<accession>P19897</accession>
<sequence>DRYERGDVNLDLKGF</sequence>
<keyword id="KW-0190">Covalent protein-DNA linkage</keyword>
<keyword id="KW-1235">Degradation of host cell envelope components during virus entry</keyword>
<keyword id="KW-1236">Degradation of host peptidoglycans during virus entry</keyword>
<keyword id="KW-0235">DNA replication</keyword>
<keyword id="KW-0244">Early protein</keyword>
<keyword id="KW-0378">Hydrolase</keyword>
<keyword id="KW-0597">Phosphoprotein</keyword>
<keyword id="KW-1194">Viral DNA replication</keyword>
<keyword id="KW-0946">Virion</keyword>
<keyword id="KW-1160">Virus entry into host cell</keyword>